<keyword id="KW-0066">ATP synthesis</keyword>
<keyword id="KW-0067">ATP-binding</keyword>
<keyword id="KW-0997">Cell inner membrane</keyword>
<keyword id="KW-1003">Cell membrane</keyword>
<keyword id="KW-0139">CF(1)</keyword>
<keyword id="KW-0375">Hydrogen ion transport</keyword>
<keyword id="KW-0406">Ion transport</keyword>
<keyword id="KW-0472">Membrane</keyword>
<keyword id="KW-0547">Nucleotide-binding</keyword>
<keyword id="KW-1185">Reference proteome</keyword>
<keyword id="KW-1278">Translocase</keyword>
<keyword id="KW-0813">Transport</keyword>
<sequence length="514" mass="55586">MQQLNPSEISDIIKQRIEKLDVASEARNEGTVVSVSDGIVKIHGLADAMFGEMIEFPGSIFGMVLNLERDSVGAVVLGDYLQLEEGMTAQCTGRILEVPVGPELIGRVVDPLGVPIDGKGELDTKLTDAVEKVAPGVITRQSVDEPIQTGLKSIDAMVPIGRGQRELIIGDRQIGKSAIAIDTIINQKGKGVTCVYVAIGQKQSTIANVVRKLEEHGAMEHTIVVAAGAADPAPMQFLAAYSGCTMGEYFRDRGEDALIVYDDLSKQAVAYRQVSLLLRRPPGREAYPGDVFYLHSRLLERAARVNADHVEKLTNGEVKGKTGSLTALPIIETQGGDVSAFVPTNVISITDGQIFLETNLFNSGVRPAINAGLSVSRVGGSAQTKIIKKLGGSVRLALAQYRELAAFSQFASDLDEATRKQLEHGQRVTELMKQNQYSPLSVAEMAVSLYAANEGFLDDVEVSKVLDFERALHAYMKSEHAELLDKINQSGGYDDEIQQGLKSGLETFKSTQTW</sequence>
<accession>Q1QSC8</accession>
<protein>
    <recommendedName>
        <fullName evidence="1">ATP synthase subunit alpha</fullName>
        <ecNumber evidence="1">7.1.2.2</ecNumber>
    </recommendedName>
    <alternativeName>
        <fullName evidence="1">ATP synthase F1 sector subunit alpha</fullName>
    </alternativeName>
    <alternativeName>
        <fullName evidence="1">F-ATPase subunit alpha</fullName>
    </alternativeName>
</protein>
<comment type="function">
    <text evidence="1">Produces ATP from ADP in the presence of a proton gradient across the membrane. The alpha chain is a regulatory subunit.</text>
</comment>
<comment type="catalytic activity">
    <reaction evidence="1">
        <text>ATP + H2O + 4 H(+)(in) = ADP + phosphate + 5 H(+)(out)</text>
        <dbReference type="Rhea" id="RHEA:57720"/>
        <dbReference type="ChEBI" id="CHEBI:15377"/>
        <dbReference type="ChEBI" id="CHEBI:15378"/>
        <dbReference type="ChEBI" id="CHEBI:30616"/>
        <dbReference type="ChEBI" id="CHEBI:43474"/>
        <dbReference type="ChEBI" id="CHEBI:456216"/>
        <dbReference type="EC" id="7.1.2.2"/>
    </reaction>
</comment>
<comment type="subunit">
    <text evidence="1">F-type ATPases have 2 components, CF(1) - the catalytic core - and CF(0) - the membrane proton channel. CF(1) has five subunits: alpha(3), beta(3), gamma(1), delta(1), epsilon(1). CF(0) has three main subunits: a(1), b(2) and c(9-12). The alpha and beta chains form an alternating ring which encloses part of the gamma chain. CF(1) is attached to CF(0) by a central stalk formed by the gamma and epsilon chains, while a peripheral stalk is formed by the delta and b chains.</text>
</comment>
<comment type="subcellular location">
    <subcellularLocation>
        <location evidence="1">Cell inner membrane</location>
        <topology evidence="1">Peripheral membrane protein</topology>
    </subcellularLocation>
</comment>
<comment type="similarity">
    <text evidence="1">Belongs to the ATPase alpha/beta chains family.</text>
</comment>
<name>ATPA_CHRSD</name>
<evidence type="ECO:0000255" key="1">
    <source>
        <dbReference type="HAMAP-Rule" id="MF_01346"/>
    </source>
</evidence>
<feature type="chain" id="PRO_0000256086" description="ATP synthase subunit alpha">
    <location>
        <begin position="1"/>
        <end position="514"/>
    </location>
</feature>
<feature type="binding site" evidence="1">
    <location>
        <begin position="170"/>
        <end position="177"/>
    </location>
    <ligand>
        <name>ATP</name>
        <dbReference type="ChEBI" id="CHEBI:30616"/>
    </ligand>
</feature>
<feature type="site" description="Required for activity" evidence="1">
    <location>
        <position position="374"/>
    </location>
</feature>
<organism>
    <name type="scientific">Chromohalobacter salexigens (strain ATCC BAA-138 / DSM 3043 / CIP 106854 / NCIMB 13768 / 1H11)</name>
    <dbReference type="NCBI Taxonomy" id="290398"/>
    <lineage>
        <taxon>Bacteria</taxon>
        <taxon>Pseudomonadati</taxon>
        <taxon>Pseudomonadota</taxon>
        <taxon>Gammaproteobacteria</taxon>
        <taxon>Oceanospirillales</taxon>
        <taxon>Halomonadaceae</taxon>
        <taxon>Chromohalobacter</taxon>
    </lineage>
</organism>
<reference key="1">
    <citation type="journal article" date="2011" name="Stand. Genomic Sci.">
        <title>Complete genome sequence of the halophilic and highly halotolerant Chromohalobacter salexigens type strain (1H11(T)).</title>
        <authorList>
            <person name="Copeland A."/>
            <person name="O'Connor K."/>
            <person name="Lucas S."/>
            <person name="Lapidus A."/>
            <person name="Berry K.W."/>
            <person name="Detter J.C."/>
            <person name="Del Rio T.G."/>
            <person name="Hammon N."/>
            <person name="Dalin E."/>
            <person name="Tice H."/>
            <person name="Pitluck S."/>
            <person name="Bruce D."/>
            <person name="Goodwin L."/>
            <person name="Han C."/>
            <person name="Tapia R."/>
            <person name="Saunders E."/>
            <person name="Schmutz J."/>
            <person name="Brettin T."/>
            <person name="Larimer F."/>
            <person name="Land M."/>
            <person name="Hauser L."/>
            <person name="Vargas C."/>
            <person name="Nieto J.J."/>
            <person name="Kyrpides N.C."/>
            <person name="Ivanova N."/>
            <person name="Goker M."/>
            <person name="Klenk H.P."/>
            <person name="Csonka L.N."/>
            <person name="Woyke T."/>
        </authorList>
    </citation>
    <scope>NUCLEOTIDE SEQUENCE [LARGE SCALE GENOMIC DNA]</scope>
    <source>
        <strain>ATCC BAA-138 / DSM 3043 / CIP 106854 / NCIMB 13768 / 1H11</strain>
    </source>
</reference>
<dbReference type="EC" id="7.1.2.2" evidence="1"/>
<dbReference type="EMBL" id="CP000285">
    <property type="protein sequence ID" value="ABE60630.1"/>
    <property type="molecule type" value="Genomic_DNA"/>
</dbReference>
<dbReference type="RefSeq" id="WP_011508576.1">
    <property type="nucleotide sequence ID" value="NC_007963.1"/>
</dbReference>
<dbReference type="SMR" id="Q1QSC8"/>
<dbReference type="STRING" id="290398.Csal_3286"/>
<dbReference type="GeneID" id="95335977"/>
<dbReference type="KEGG" id="csa:Csal_3286"/>
<dbReference type="eggNOG" id="COG0056">
    <property type="taxonomic scope" value="Bacteria"/>
</dbReference>
<dbReference type="HOGENOM" id="CLU_010091_2_1_6"/>
<dbReference type="OrthoDB" id="9803053at2"/>
<dbReference type="Proteomes" id="UP000000239">
    <property type="component" value="Chromosome"/>
</dbReference>
<dbReference type="GO" id="GO:0005886">
    <property type="term" value="C:plasma membrane"/>
    <property type="evidence" value="ECO:0007669"/>
    <property type="project" value="UniProtKB-SubCell"/>
</dbReference>
<dbReference type="GO" id="GO:0045259">
    <property type="term" value="C:proton-transporting ATP synthase complex"/>
    <property type="evidence" value="ECO:0007669"/>
    <property type="project" value="UniProtKB-KW"/>
</dbReference>
<dbReference type="GO" id="GO:0043531">
    <property type="term" value="F:ADP binding"/>
    <property type="evidence" value="ECO:0007669"/>
    <property type="project" value="TreeGrafter"/>
</dbReference>
<dbReference type="GO" id="GO:0005524">
    <property type="term" value="F:ATP binding"/>
    <property type="evidence" value="ECO:0007669"/>
    <property type="project" value="UniProtKB-UniRule"/>
</dbReference>
<dbReference type="GO" id="GO:0046933">
    <property type="term" value="F:proton-transporting ATP synthase activity, rotational mechanism"/>
    <property type="evidence" value="ECO:0007669"/>
    <property type="project" value="UniProtKB-UniRule"/>
</dbReference>
<dbReference type="CDD" id="cd18113">
    <property type="entry name" value="ATP-synt_F1_alpha_C"/>
    <property type="match status" value="1"/>
</dbReference>
<dbReference type="CDD" id="cd18116">
    <property type="entry name" value="ATP-synt_F1_alpha_N"/>
    <property type="match status" value="1"/>
</dbReference>
<dbReference type="CDD" id="cd01132">
    <property type="entry name" value="F1-ATPase_alpha_CD"/>
    <property type="match status" value="1"/>
</dbReference>
<dbReference type="FunFam" id="1.20.150.20:FF:000001">
    <property type="entry name" value="ATP synthase subunit alpha"/>
    <property type="match status" value="1"/>
</dbReference>
<dbReference type="FunFam" id="2.40.30.20:FF:000001">
    <property type="entry name" value="ATP synthase subunit alpha"/>
    <property type="match status" value="1"/>
</dbReference>
<dbReference type="FunFam" id="3.40.50.300:FF:000002">
    <property type="entry name" value="ATP synthase subunit alpha"/>
    <property type="match status" value="1"/>
</dbReference>
<dbReference type="Gene3D" id="2.40.30.20">
    <property type="match status" value="1"/>
</dbReference>
<dbReference type="Gene3D" id="1.20.150.20">
    <property type="entry name" value="ATP synthase alpha/beta chain, C-terminal domain"/>
    <property type="match status" value="1"/>
</dbReference>
<dbReference type="Gene3D" id="3.40.50.300">
    <property type="entry name" value="P-loop containing nucleotide triphosphate hydrolases"/>
    <property type="match status" value="1"/>
</dbReference>
<dbReference type="HAMAP" id="MF_01346">
    <property type="entry name" value="ATP_synth_alpha_bact"/>
    <property type="match status" value="1"/>
</dbReference>
<dbReference type="InterPro" id="IPR023366">
    <property type="entry name" value="ATP_synth_asu-like_sf"/>
</dbReference>
<dbReference type="InterPro" id="IPR000793">
    <property type="entry name" value="ATP_synth_asu_C"/>
</dbReference>
<dbReference type="InterPro" id="IPR038376">
    <property type="entry name" value="ATP_synth_asu_C_sf"/>
</dbReference>
<dbReference type="InterPro" id="IPR033732">
    <property type="entry name" value="ATP_synth_F1_a_nt-bd_dom"/>
</dbReference>
<dbReference type="InterPro" id="IPR005294">
    <property type="entry name" value="ATP_synth_F1_asu"/>
</dbReference>
<dbReference type="InterPro" id="IPR020003">
    <property type="entry name" value="ATPase_a/bsu_AS"/>
</dbReference>
<dbReference type="InterPro" id="IPR004100">
    <property type="entry name" value="ATPase_F1/V1/A1_a/bsu_N"/>
</dbReference>
<dbReference type="InterPro" id="IPR036121">
    <property type="entry name" value="ATPase_F1/V1/A1_a/bsu_N_sf"/>
</dbReference>
<dbReference type="InterPro" id="IPR000194">
    <property type="entry name" value="ATPase_F1/V1/A1_a/bsu_nucl-bd"/>
</dbReference>
<dbReference type="InterPro" id="IPR027417">
    <property type="entry name" value="P-loop_NTPase"/>
</dbReference>
<dbReference type="NCBIfam" id="TIGR00962">
    <property type="entry name" value="atpA"/>
    <property type="match status" value="1"/>
</dbReference>
<dbReference type="NCBIfam" id="NF009884">
    <property type="entry name" value="PRK13343.1"/>
    <property type="match status" value="1"/>
</dbReference>
<dbReference type="PANTHER" id="PTHR48082">
    <property type="entry name" value="ATP SYNTHASE SUBUNIT ALPHA, MITOCHONDRIAL"/>
    <property type="match status" value="1"/>
</dbReference>
<dbReference type="PANTHER" id="PTHR48082:SF2">
    <property type="entry name" value="ATP SYNTHASE SUBUNIT ALPHA, MITOCHONDRIAL"/>
    <property type="match status" value="1"/>
</dbReference>
<dbReference type="Pfam" id="PF00006">
    <property type="entry name" value="ATP-synt_ab"/>
    <property type="match status" value="1"/>
</dbReference>
<dbReference type="Pfam" id="PF00306">
    <property type="entry name" value="ATP-synt_ab_C"/>
    <property type="match status" value="1"/>
</dbReference>
<dbReference type="Pfam" id="PF02874">
    <property type="entry name" value="ATP-synt_ab_N"/>
    <property type="match status" value="1"/>
</dbReference>
<dbReference type="PIRSF" id="PIRSF039088">
    <property type="entry name" value="F_ATPase_subunit_alpha"/>
    <property type="match status" value="1"/>
</dbReference>
<dbReference type="SUPFAM" id="SSF47917">
    <property type="entry name" value="C-terminal domain of alpha and beta subunits of F1 ATP synthase"/>
    <property type="match status" value="1"/>
</dbReference>
<dbReference type="SUPFAM" id="SSF50615">
    <property type="entry name" value="N-terminal domain of alpha and beta subunits of F1 ATP synthase"/>
    <property type="match status" value="1"/>
</dbReference>
<dbReference type="SUPFAM" id="SSF52540">
    <property type="entry name" value="P-loop containing nucleoside triphosphate hydrolases"/>
    <property type="match status" value="1"/>
</dbReference>
<dbReference type="PROSITE" id="PS00152">
    <property type="entry name" value="ATPASE_ALPHA_BETA"/>
    <property type="match status" value="1"/>
</dbReference>
<proteinExistence type="inferred from homology"/>
<gene>
    <name evidence="1" type="primary">atpA</name>
    <name type="ordered locus">Csal_3286</name>
</gene>